<keyword id="KW-0324">Glycolysis</keyword>
<keyword id="KW-0456">Lyase</keyword>
<keyword id="KW-0704">Schiff base</keyword>
<reference key="1">
    <citation type="journal article" date="2006" name="Lancet">
        <title>Complete genome sequence of USA300, an epidemic clone of community-acquired meticillin-resistant Staphylococcus aureus.</title>
        <authorList>
            <person name="Diep B.A."/>
            <person name="Gill S.R."/>
            <person name="Chang R.F."/>
            <person name="Phan T.H."/>
            <person name="Chen J.H."/>
            <person name="Davidson M.G."/>
            <person name="Lin F."/>
            <person name="Lin J."/>
            <person name="Carleton H.A."/>
            <person name="Mongodin E.F."/>
            <person name="Sensabaugh G.F."/>
            <person name="Perdreau-Remington F."/>
        </authorList>
    </citation>
    <scope>NUCLEOTIDE SEQUENCE [LARGE SCALE GENOMIC DNA]</scope>
    <source>
        <strain>USA300</strain>
    </source>
</reference>
<feature type="chain" id="PRO_1000045917" description="Fructose-bisphosphate aldolase class 1">
    <location>
        <begin position="1"/>
        <end position="296"/>
    </location>
</feature>
<feature type="active site" description="Proton acceptor" evidence="1">
    <location>
        <position position="175"/>
    </location>
</feature>
<feature type="active site" description="Schiff-base intermediate with dihydroxyacetone-P" evidence="1">
    <location>
        <position position="212"/>
    </location>
</feature>
<proteinExistence type="inferred from homology"/>
<organism>
    <name type="scientific">Staphylococcus aureus (strain USA300)</name>
    <dbReference type="NCBI Taxonomy" id="367830"/>
    <lineage>
        <taxon>Bacteria</taxon>
        <taxon>Bacillati</taxon>
        <taxon>Bacillota</taxon>
        <taxon>Bacilli</taxon>
        <taxon>Bacillales</taxon>
        <taxon>Staphylococcaceae</taxon>
        <taxon>Staphylococcus</taxon>
    </lineage>
</organism>
<gene>
    <name evidence="1" type="primary">fda</name>
    <name type="ordered locus">SAUSA300_2540</name>
</gene>
<dbReference type="EC" id="4.1.2.13" evidence="1"/>
<dbReference type="EMBL" id="CP000255">
    <property type="protein sequence ID" value="ABD21309.1"/>
    <property type="molecule type" value="Genomic_DNA"/>
</dbReference>
<dbReference type="RefSeq" id="WP_001031413.1">
    <property type="nucleotide sequence ID" value="NZ_CP027476.1"/>
</dbReference>
<dbReference type="SMR" id="Q2FDQ4"/>
<dbReference type="KEGG" id="saa:SAUSA300_2540"/>
<dbReference type="HOGENOM" id="CLU_081560_0_0_9"/>
<dbReference type="OMA" id="GVFGTKM"/>
<dbReference type="UniPathway" id="UPA00109">
    <property type="reaction ID" value="UER00183"/>
</dbReference>
<dbReference type="Proteomes" id="UP000001939">
    <property type="component" value="Chromosome"/>
</dbReference>
<dbReference type="GO" id="GO:0004332">
    <property type="term" value="F:fructose-bisphosphate aldolase activity"/>
    <property type="evidence" value="ECO:0007669"/>
    <property type="project" value="UniProtKB-UniRule"/>
</dbReference>
<dbReference type="GO" id="GO:0006096">
    <property type="term" value="P:glycolytic process"/>
    <property type="evidence" value="ECO:0007669"/>
    <property type="project" value="UniProtKB-UniRule"/>
</dbReference>
<dbReference type="Gene3D" id="3.20.20.70">
    <property type="entry name" value="Aldolase class I"/>
    <property type="match status" value="1"/>
</dbReference>
<dbReference type="HAMAP" id="MF_00729">
    <property type="entry name" value="FBP_aldolase_1"/>
    <property type="match status" value="1"/>
</dbReference>
<dbReference type="InterPro" id="IPR013785">
    <property type="entry name" value="Aldolase_TIM"/>
</dbReference>
<dbReference type="InterPro" id="IPR000741">
    <property type="entry name" value="FBA_I"/>
</dbReference>
<dbReference type="InterPro" id="IPR023014">
    <property type="entry name" value="FBA_I_Gram+-type"/>
</dbReference>
<dbReference type="NCBIfam" id="NF003784">
    <property type="entry name" value="PRK05377.1"/>
    <property type="match status" value="1"/>
</dbReference>
<dbReference type="PANTHER" id="PTHR11627">
    <property type="entry name" value="FRUCTOSE-BISPHOSPHATE ALDOLASE"/>
    <property type="match status" value="1"/>
</dbReference>
<dbReference type="Pfam" id="PF00274">
    <property type="entry name" value="Glycolytic"/>
    <property type="match status" value="1"/>
</dbReference>
<dbReference type="SUPFAM" id="SSF51569">
    <property type="entry name" value="Aldolase"/>
    <property type="match status" value="1"/>
</dbReference>
<evidence type="ECO:0000255" key="1">
    <source>
        <dbReference type="HAMAP-Rule" id="MF_00729"/>
    </source>
</evidence>
<comment type="catalytic activity">
    <reaction evidence="1">
        <text>beta-D-fructose 1,6-bisphosphate = D-glyceraldehyde 3-phosphate + dihydroxyacetone phosphate</text>
        <dbReference type="Rhea" id="RHEA:14729"/>
        <dbReference type="ChEBI" id="CHEBI:32966"/>
        <dbReference type="ChEBI" id="CHEBI:57642"/>
        <dbReference type="ChEBI" id="CHEBI:59776"/>
        <dbReference type="EC" id="4.1.2.13"/>
    </reaction>
</comment>
<comment type="pathway">
    <text evidence="1">Carbohydrate degradation; glycolysis; D-glyceraldehyde 3-phosphate and glycerone phosphate from D-glucose: step 4/4.</text>
</comment>
<comment type="similarity">
    <text evidence="1">Belongs to the class I fructose-bisphosphate aldolase family.</text>
</comment>
<accession>Q2FDQ4</accession>
<sequence length="296" mass="33055">MNKEQLEKMKNGKGFIAALDQSGGSTPKALKEYGVNEDQYSNEDEMFQLVHDMRTRVVTSPSFSPDKILGAILFEQTMDREVESKYTADYLADKGVVPFLKVDKGLAEEQNGVQLMKPIDNLDNLLDRANERHIFGTKMRSNILELNEQGIKDVVEQQFEVAKQIIAKGLVPIIEPEVNINAKDKAEIEKVLKAELKKGLDSLNADQLVMLKLTIPTEPNLYKELAEHPNVVRVVVLSGGYSREKANELLKDNAELIASFSRALASDLRADQSKEEFDKALGDAVESIYDASVNKN</sequence>
<protein>
    <recommendedName>
        <fullName evidence="1">Fructose-bisphosphate aldolase class 1</fullName>
        <ecNumber evidence="1">4.1.2.13</ecNumber>
    </recommendedName>
    <alternativeName>
        <fullName>Fructose-bisphosphate aldolase class I</fullName>
        <shortName evidence="1">FBP aldolase</shortName>
    </alternativeName>
</protein>
<name>ALF1_STAA3</name>